<protein>
    <recommendedName>
        <fullName evidence="1">Holliday junction branch migration complex subunit RuvA</fullName>
    </recommendedName>
</protein>
<name>RUVA_SHIB3</name>
<proteinExistence type="inferred from homology"/>
<reference key="1">
    <citation type="submission" date="2008-05" db="EMBL/GenBank/DDBJ databases">
        <title>Complete sequence of Shigella boydii serotype 18 strain BS512.</title>
        <authorList>
            <person name="Rasko D.A."/>
            <person name="Rosovitz M."/>
            <person name="Maurelli A.T."/>
            <person name="Myers G."/>
            <person name="Seshadri R."/>
            <person name="Cer R."/>
            <person name="Jiang L."/>
            <person name="Ravel J."/>
            <person name="Sebastian Y."/>
        </authorList>
    </citation>
    <scope>NUCLEOTIDE SEQUENCE [LARGE SCALE GENOMIC DNA]</scope>
    <source>
        <strain>CDC 3083-94 / BS512</strain>
    </source>
</reference>
<comment type="function">
    <text evidence="1">The RuvA-RuvB-RuvC complex processes Holliday junction (HJ) DNA during genetic recombination and DNA repair, while the RuvA-RuvB complex plays an important role in the rescue of blocked DNA replication forks via replication fork reversal (RFR). RuvA specifically binds to HJ cruciform DNA, conferring on it an open structure. The RuvB hexamer acts as an ATP-dependent pump, pulling dsDNA into and through the RuvAB complex. HJ branch migration allows RuvC to scan DNA until it finds its consensus sequence, where it cleaves and resolves the cruciform DNA.</text>
</comment>
<comment type="subunit">
    <text evidence="1">Homotetramer. Forms an RuvA(8)-RuvB(12)-Holliday junction (HJ) complex. HJ DNA is sandwiched between 2 RuvA tetramers; dsDNA enters through RuvA and exits via RuvB. An RuvB hexamer assembles on each DNA strand where it exits the tetramer. Each RuvB hexamer is contacted by two RuvA subunits (via domain III) on 2 adjacent RuvB subunits; this complex drives branch migration. In the full resolvosome a probable DNA-RuvA(4)-RuvB(12)-RuvC(2) complex forms which resolves the HJ.</text>
</comment>
<comment type="subcellular location">
    <subcellularLocation>
        <location evidence="1">Cytoplasm</location>
    </subcellularLocation>
</comment>
<comment type="domain">
    <text evidence="1">Has three domains with a flexible linker between the domains II and III and assumes an 'L' shape. Domain III is highly mobile and contacts RuvB.</text>
</comment>
<comment type="similarity">
    <text evidence="1">Belongs to the RuvA family.</text>
</comment>
<feature type="chain" id="PRO_1000090370" description="Holliday junction branch migration complex subunit RuvA">
    <location>
        <begin position="1"/>
        <end position="203"/>
    </location>
</feature>
<feature type="region of interest" description="Domain I" evidence="1">
    <location>
        <begin position="1"/>
        <end position="64"/>
    </location>
</feature>
<feature type="region of interest" description="Domain II" evidence="1">
    <location>
        <begin position="65"/>
        <end position="142"/>
    </location>
</feature>
<feature type="region of interest" description="Flexible linker" evidence="1">
    <location>
        <begin position="143"/>
        <end position="154"/>
    </location>
</feature>
<feature type="region of interest" description="Domain III" evidence="1">
    <location>
        <begin position="155"/>
        <end position="203"/>
    </location>
</feature>
<accession>B2TWQ2</accession>
<sequence>MIGRLRGIIIEKQPPLVLIEVGGVGYEVHMPMTCFYELPEAGQEAIVFTHFVVREDAQLLYGFNNKQERTLFKELIKTNGVGPKLALAILSGMSAQQFVNAVEREEVGALVKLPGIGKKTAERLIVEMKDRFKGLHGDLFTPAADLVLTSPASPATDDAEQEAVAALVALGYKPQEASRMVSKIARPDASSETLIREALRAAL</sequence>
<dbReference type="EMBL" id="CP001063">
    <property type="protein sequence ID" value="ACD06485.1"/>
    <property type="molecule type" value="Genomic_DNA"/>
</dbReference>
<dbReference type="RefSeq" id="WP_000580323.1">
    <property type="nucleotide sequence ID" value="NC_010658.1"/>
</dbReference>
<dbReference type="SMR" id="B2TWQ2"/>
<dbReference type="STRING" id="344609.SbBS512_E0957"/>
<dbReference type="GeneID" id="75057740"/>
<dbReference type="KEGG" id="sbc:SbBS512_E0957"/>
<dbReference type="HOGENOM" id="CLU_087936_0_0_6"/>
<dbReference type="Proteomes" id="UP000001030">
    <property type="component" value="Chromosome"/>
</dbReference>
<dbReference type="GO" id="GO:0005737">
    <property type="term" value="C:cytoplasm"/>
    <property type="evidence" value="ECO:0007669"/>
    <property type="project" value="UniProtKB-SubCell"/>
</dbReference>
<dbReference type="GO" id="GO:0009379">
    <property type="term" value="C:Holliday junction helicase complex"/>
    <property type="evidence" value="ECO:0007669"/>
    <property type="project" value="InterPro"/>
</dbReference>
<dbReference type="GO" id="GO:0048476">
    <property type="term" value="C:Holliday junction resolvase complex"/>
    <property type="evidence" value="ECO:0007669"/>
    <property type="project" value="UniProtKB-UniRule"/>
</dbReference>
<dbReference type="GO" id="GO:0005524">
    <property type="term" value="F:ATP binding"/>
    <property type="evidence" value="ECO:0007669"/>
    <property type="project" value="InterPro"/>
</dbReference>
<dbReference type="GO" id="GO:0000400">
    <property type="term" value="F:four-way junction DNA binding"/>
    <property type="evidence" value="ECO:0007669"/>
    <property type="project" value="UniProtKB-UniRule"/>
</dbReference>
<dbReference type="GO" id="GO:0009378">
    <property type="term" value="F:four-way junction helicase activity"/>
    <property type="evidence" value="ECO:0007669"/>
    <property type="project" value="InterPro"/>
</dbReference>
<dbReference type="GO" id="GO:0006310">
    <property type="term" value="P:DNA recombination"/>
    <property type="evidence" value="ECO:0007669"/>
    <property type="project" value="UniProtKB-UniRule"/>
</dbReference>
<dbReference type="GO" id="GO:0006281">
    <property type="term" value="P:DNA repair"/>
    <property type="evidence" value="ECO:0007669"/>
    <property type="project" value="UniProtKB-UniRule"/>
</dbReference>
<dbReference type="CDD" id="cd14332">
    <property type="entry name" value="UBA_RuvA_C"/>
    <property type="match status" value="1"/>
</dbReference>
<dbReference type="FunFam" id="1.10.150.20:FF:000012">
    <property type="entry name" value="Holliday junction ATP-dependent DNA helicase RuvA"/>
    <property type="match status" value="1"/>
</dbReference>
<dbReference type="FunFam" id="1.10.8.10:FF:000008">
    <property type="entry name" value="Holliday junction ATP-dependent DNA helicase RuvA"/>
    <property type="match status" value="1"/>
</dbReference>
<dbReference type="FunFam" id="2.40.50.140:FF:000083">
    <property type="entry name" value="Holliday junction ATP-dependent DNA helicase RuvA"/>
    <property type="match status" value="1"/>
</dbReference>
<dbReference type="Gene3D" id="1.10.150.20">
    <property type="entry name" value="5' to 3' exonuclease, C-terminal subdomain"/>
    <property type="match status" value="1"/>
</dbReference>
<dbReference type="Gene3D" id="1.10.8.10">
    <property type="entry name" value="DNA helicase RuvA subunit, C-terminal domain"/>
    <property type="match status" value="1"/>
</dbReference>
<dbReference type="Gene3D" id="2.40.50.140">
    <property type="entry name" value="Nucleic acid-binding proteins"/>
    <property type="match status" value="1"/>
</dbReference>
<dbReference type="HAMAP" id="MF_00031">
    <property type="entry name" value="DNA_HJ_migration_RuvA"/>
    <property type="match status" value="1"/>
</dbReference>
<dbReference type="InterPro" id="IPR013849">
    <property type="entry name" value="DNA_helicase_Holl-junc_RuvA_I"/>
</dbReference>
<dbReference type="InterPro" id="IPR003583">
    <property type="entry name" value="Hlx-hairpin-Hlx_DNA-bd_motif"/>
</dbReference>
<dbReference type="InterPro" id="IPR012340">
    <property type="entry name" value="NA-bd_OB-fold"/>
</dbReference>
<dbReference type="InterPro" id="IPR000085">
    <property type="entry name" value="RuvA"/>
</dbReference>
<dbReference type="InterPro" id="IPR010994">
    <property type="entry name" value="RuvA_2-like"/>
</dbReference>
<dbReference type="InterPro" id="IPR011114">
    <property type="entry name" value="RuvA_C"/>
</dbReference>
<dbReference type="InterPro" id="IPR036267">
    <property type="entry name" value="RuvA_C_sf"/>
</dbReference>
<dbReference type="NCBIfam" id="TIGR00084">
    <property type="entry name" value="ruvA"/>
    <property type="match status" value="1"/>
</dbReference>
<dbReference type="Pfam" id="PF14520">
    <property type="entry name" value="HHH_5"/>
    <property type="match status" value="1"/>
</dbReference>
<dbReference type="Pfam" id="PF07499">
    <property type="entry name" value="RuvA_C"/>
    <property type="match status" value="1"/>
</dbReference>
<dbReference type="Pfam" id="PF01330">
    <property type="entry name" value="RuvA_N"/>
    <property type="match status" value="1"/>
</dbReference>
<dbReference type="SMART" id="SM00278">
    <property type="entry name" value="HhH1"/>
    <property type="match status" value="2"/>
</dbReference>
<dbReference type="SUPFAM" id="SSF46929">
    <property type="entry name" value="DNA helicase RuvA subunit, C-terminal domain"/>
    <property type="match status" value="1"/>
</dbReference>
<dbReference type="SUPFAM" id="SSF50249">
    <property type="entry name" value="Nucleic acid-binding proteins"/>
    <property type="match status" value="1"/>
</dbReference>
<dbReference type="SUPFAM" id="SSF47781">
    <property type="entry name" value="RuvA domain 2-like"/>
    <property type="match status" value="1"/>
</dbReference>
<gene>
    <name evidence="1" type="primary">ruvA</name>
    <name type="ordered locus">SbBS512_E0957</name>
</gene>
<organism>
    <name type="scientific">Shigella boydii serotype 18 (strain CDC 3083-94 / BS512)</name>
    <dbReference type="NCBI Taxonomy" id="344609"/>
    <lineage>
        <taxon>Bacteria</taxon>
        <taxon>Pseudomonadati</taxon>
        <taxon>Pseudomonadota</taxon>
        <taxon>Gammaproteobacteria</taxon>
        <taxon>Enterobacterales</taxon>
        <taxon>Enterobacteriaceae</taxon>
        <taxon>Shigella</taxon>
    </lineage>
</organism>
<keyword id="KW-0963">Cytoplasm</keyword>
<keyword id="KW-0227">DNA damage</keyword>
<keyword id="KW-0233">DNA recombination</keyword>
<keyword id="KW-0234">DNA repair</keyword>
<keyword id="KW-0238">DNA-binding</keyword>
<keyword id="KW-1185">Reference proteome</keyword>
<evidence type="ECO:0000255" key="1">
    <source>
        <dbReference type="HAMAP-Rule" id="MF_00031"/>
    </source>
</evidence>